<evidence type="ECO:0000255" key="1">
    <source>
        <dbReference type="HAMAP-Rule" id="MF_01031"/>
    </source>
</evidence>
<organism>
    <name type="scientific">Methylococcus capsulatus (strain ATCC 33009 / NCIMB 11132 / Bath)</name>
    <dbReference type="NCBI Taxonomy" id="243233"/>
    <lineage>
        <taxon>Bacteria</taxon>
        <taxon>Pseudomonadati</taxon>
        <taxon>Pseudomonadota</taxon>
        <taxon>Gammaproteobacteria</taxon>
        <taxon>Methylococcales</taxon>
        <taxon>Methylococcaceae</taxon>
        <taxon>Methylococcus</taxon>
    </lineage>
</organism>
<keyword id="KW-0028">Amino-acid biosynthesis</keyword>
<keyword id="KW-0100">Branched-chain amino acid biosynthesis</keyword>
<keyword id="KW-0432">Leucine biosynthesis</keyword>
<keyword id="KW-0456">Lyase</keyword>
<keyword id="KW-1185">Reference proteome</keyword>
<comment type="function">
    <text evidence="1">Catalyzes the isomerization between 2-isopropylmalate and 3-isopropylmalate, via the formation of 2-isopropylmaleate.</text>
</comment>
<comment type="catalytic activity">
    <reaction evidence="1">
        <text>(2R,3S)-3-isopropylmalate = (2S)-2-isopropylmalate</text>
        <dbReference type="Rhea" id="RHEA:32287"/>
        <dbReference type="ChEBI" id="CHEBI:1178"/>
        <dbReference type="ChEBI" id="CHEBI:35121"/>
        <dbReference type="EC" id="4.2.1.33"/>
    </reaction>
</comment>
<comment type="pathway">
    <text evidence="1">Amino-acid biosynthesis; L-leucine biosynthesis; L-leucine from 3-methyl-2-oxobutanoate: step 2/4.</text>
</comment>
<comment type="subunit">
    <text evidence="1">Heterodimer of LeuC and LeuD.</text>
</comment>
<comment type="similarity">
    <text evidence="1">Belongs to the LeuD family. LeuD type 1 subfamily.</text>
</comment>
<feature type="chain" id="PRO_0000141836" description="3-isopropylmalate dehydratase small subunit">
    <location>
        <begin position="1"/>
        <end position="212"/>
    </location>
</feature>
<name>LEUD_METCA</name>
<accession>Q606F3</accession>
<sequence length="212" mass="23971">MKPFKKFTSRVVPLDRANVDTDAIIPKQFLKSIRRSGFGPYLFDEWRYLDRGEPDMDCSHRPLNPEFVLNLPCYAGARILLARKNFGCGSSREHAPWALEDYGFRAIIAPSFADIFYNNCFKNGILPIVLDEATVDRLFSEAGPGFELTVDLESQTVATPFGETFHFDVDASRKHRLLNGLDDIGLTLQHADAIRAYEAARRKSAPWLFAVP</sequence>
<dbReference type="EC" id="4.2.1.33" evidence="1"/>
<dbReference type="EMBL" id="AE017282">
    <property type="protein sequence ID" value="AAU91967.1"/>
    <property type="molecule type" value="Genomic_DNA"/>
</dbReference>
<dbReference type="RefSeq" id="WP_010961308.1">
    <property type="nucleotide sequence ID" value="NC_002977.6"/>
</dbReference>
<dbReference type="SMR" id="Q606F3"/>
<dbReference type="STRING" id="243233.MCA2064"/>
<dbReference type="GeneID" id="88224290"/>
<dbReference type="KEGG" id="mca:MCA2064"/>
<dbReference type="eggNOG" id="COG0066">
    <property type="taxonomic scope" value="Bacteria"/>
</dbReference>
<dbReference type="HOGENOM" id="CLU_081378_0_3_6"/>
<dbReference type="UniPathway" id="UPA00048">
    <property type="reaction ID" value="UER00071"/>
</dbReference>
<dbReference type="Proteomes" id="UP000006821">
    <property type="component" value="Chromosome"/>
</dbReference>
<dbReference type="GO" id="GO:0009316">
    <property type="term" value="C:3-isopropylmalate dehydratase complex"/>
    <property type="evidence" value="ECO:0007669"/>
    <property type="project" value="InterPro"/>
</dbReference>
<dbReference type="GO" id="GO:0003861">
    <property type="term" value="F:3-isopropylmalate dehydratase activity"/>
    <property type="evidence" value="ECO:0007669"/>
    <property type="project" value="UniProtKB-UniRule"/>
</dbReference>
<dbReference type="GO" id="GO:0009098">
    <property type="term" value="P:L-leucine biosynthetic process"/>
    <property type="evidence" value="ECO:0007669"/>
    <property type="project" value="UniProtKB-UniRule"/>
</dbReference>
<dbReference type="CDD" id="cd01577">
    <property type="entry name" value="IPMI_Swivel"/>
    <property type="match status" value="1"/>
</dbReference>
<dbReference type="FunFam" id="3.20.19.10:FF:000003">
    <property type="entry name" value="3-isopropylmalate dehydratase small subunit"/>
    <property type="match status" value="1"/>
</dbReference>
<dbReference type="Gene3D" id="3.20.19.10">
    <property type="entry name" value="Aconitase, domain 4"/>
    <property type="match status" value="1"/>
</dbReference>
<dbReference type="HAMAP" id="MF_01031">
    <property type="entry name" value="LeuD_type1"/>
    <property type="match status" value="1"/>
</dbReference>
<dbReference type="InterPro" id="IPR004431">
    <property type="entry name" value="3-IsopropMal_deHydase_ssu"/>
</dbReference>
<dbReference type="InterPro" id="IPR015928">
    <property type="entry name" value="Aconitase/3IPM_dehydase_swvl"/>
</dbReference>
<dbReference type="InterPro" id="IPR000573">
    <property type="entry name" value="AconitaseA/IPMdHydase_ssu_swvl"/>
</dbReference>
<dbReference type="InterPro" id="IPR033940">
    <property type="entry name" value="IPMI_Swivel"/>
</dbReference>
<dbReference type="InterPro" id="IPR050075">
    <property type="entry name" value="LeuD"/>
</dbReference>
<dbReference type="NCBIfam" id="TIGR00171">
    <property type="entry name" value="leuD"/>
    <property type="match status" value="1"/>
</dbReference>
<dbReference type="NCBIfam" id="NF002458">
    <property type="entry name" value="PRK01641.1"/>
    <property type="match status" value="1"/>
</dbReference>
<dbReference type="PANTHER" id="PTHR43345:SF5">
    <property type="entry name" value="3-ISOPROPYLMALATE DEHYDRATASE SMALL SUBUNIT"/>
    <property type="match status" value="1"/>
</dbReference>
<dbReference type="PANTHER" id="PTHR43345">
    <property type="entry name" value="3-ISOPROPYLMALATE DEHYDRATASE SMALL SUBUNIT 2-RELATED-RELATED"/>
    <property type="match status" value="1"/>
</dbReference>
<dbReference type="Pfam" id="PF00694">
    <property type="entry name" value="Aconitase_C"/>
    <property type="match status" value="1"/>
</dbReference>
<dbReference type="SUPFAM" id="SSF52016">
    <property type="entry name" value="LeuD/IlvD-like"/>
    <property type="match status" value="1"/>
</dbReference>
<proteinExistence type="inferred from homology"/>
<reference key="1">
    <citation type="journal article" date="2004" name="PLoS Biol.">
        <title>Genomic insights into methanotrophy: the complete genome sequence of Methylococcus capsulatus (Bath).</title>
        <authorList>
            <person name="Ward N.L."/>
            <person name="Larsen O."/>
            <person name="Sakwa J."/>
            <person name="Bruseth L."/>
            <person name="Khouri H.M."/>
            <person name="Durkin A.S."/>
            <person name="Dimitrov G."/>
            <person name="Jiang L."/>
            <person name="Scanlan D."/>
            <person name="Kang K.H."/>
            <person name="Lewis M.R."/>
            <person name="Nelson K.E."/>
            <person name="Methe B.A."/>
            <person name="Wu M."/>
            <person name="Heidelberg J.F."/>
            <person name="Paulsen I.T."/>
            <person name="Fouts D.E."/>
            <person name="Ravel J."/>
            <person name="Tettelin H."/>
            <person name="Ren Q."/>
            <person name="Read T.D."/>
            <person name="DeBoy R.T."/>
            <person name="Seshadri R."/>
            <person name="Salzberg S.L."/>
            <person name="Jensen H.B."/>
            <person name="Birkeland N.K."/>
            <person name="Nelson W.C."/>
            <person name="Dodson R.J."/>
            <person name="Grindhaug S.H."/>
            <person name="Holt I.E."/>
            <person name="Eidhammer I."/>
            <person name="Jonasen I."/>
            <person name="Vanaken S."/>
            <person name="Utterback T.R."/>
            <person name="Feldblyum T.V."/>
            <person name="Fraser C.M."/>
            <person name="Lillehaug J.R."/>
            <person name="Eisen J.A."/>
        </authorList>
    </citation>
    <scope>NUCLEOTIDE SEQUENCE [LARGE SCALE GENOMIC DNA]</scope>
    <source>
        <strain>ATCC 33009 / NCIMB 11132 / Bath</strain>
    </source>
</reference>
<protein>
    <recommendedName>
        <fullName evidence="1">3-isopropylmalate dehydratase small subunit</fullName>
        <ecNumber evidence="1">4.2.1.33</ecNumber>
    </recommendedName>
    <alternativeName>
        <fullName evidence="1">Alpha-IPM isomerase</fullName>
        <shortName evidence="1">IPMI</shortName>
    </alternativeName>
    <alternativeName>
        <fullName evidence="1">Isopropylmalate isomerase</fullName>
    </alternativeName>
</protein>
<gene>
    <name evidence="1" type="primary">leuD</name>
    <name type="ordered locus">MCA2064</name>
</gene>